<sequence length="60" mass="6761">MAVQQNKKSRSKRDMRRSHDALTGPTLSVDAVSGEKHLRHHVTADGFYRGRKVINKGSDE</sequence>
<organism>
    <name type="scientific">Cellvibrio japonicus (strain Ueda107)</name>
    <name type="common">Pseudomonas fluorescens subsp. cellulosa</name>
    <dbReference type="NCBI Taxonomy" id="498211"/>
    <lineage>
        <taxon>Bacteria</taxon>
        <taxon>Pseudomonadati</taxon>
        <taxon>Pseudomonadota</taxon>
        <taxon>Gammaproteobacteria</taxon>
        <taxon>Cellvibrionales</taxon>
        <taxon>Cellvibrionaceae</taxon>
        <taxon>Cellvibrio</taxon>
    </lineage>
</organism>
<name>RL32_CELJU</name>
<proteinExistence type="inferred from homology"/>
<dbReference type="EMBL" id="CP000934">
    <property type="protein sequence ID" value="ACE84855.1"/>
    <property type="molecule type" value="Genomic_DNA"/>
</dbReference>
<dbReference type="RefSeq" id="WP_012487296.1">
    <property type="nucleotide sequence ID" value="NC_010995.1"/>
</dbReference>
<dbReference type="SMR" id="B3PEU8"/>
<dbReference type="STRING" id="498211.CJA_1673"/>
<dbReference type="KEGG" id="cja:CJA_1673"/>
<dbReference type="eggNOG" id="COG0333">
    <property type="taxonomic scope" value="Bacteria"/>
</dbReference>
<dbReference type="HOGENOM" id="CLU_129084_2_1_6"/>
<dbReference type="OrthoDB" id="9801927at2"/>
<dbReference type="Proteomes" id="UP000001036">
    <property type="component" value="Chromosome"/>
</dbReference>
<dbReference type="GO" id="GO:0015934">
    <property type="term" value="C:large ribosomal subunit"/>
    <property type="evidence" value="ECO:0007669"/>
    <property type="project" value="InterPro"/>
</dbReference>
<dbReference type="GO" id="GO:0003735">
    <property type="term" value="F:structural constituent of ribosome"/>
    <property type="evidence" value="ECO:0007669"/>
    <property type="project" value="InterPro"/>
</dbReference>
<dbReference type="GO" id="GO:0006412">
    <property type="term" value="P:translation"/>
    <property type="evidence" value="ECO:0007669"/>
    <property type="project" value="UniProtKB-UniRule"/>
</dbReference>
<dbReference type="HAMAP" id="MF_00340">
    <property type="entry name" value="Ribosomal_bL32"/>
    <property type="match status" value="1"/>
</dbReference>
<dbReference type="InterPro" id="IPR002677">
    <property type="entry name" value="Ribosomal_bL32"/>
</dbReference>
<dbReference type="InterPro" id="IPR044957">
    <property type="entry name" value="Ribosomal_bL32_bact"/>
</dbReference>
<dbReference type="InterPro" id="IPR011332">
    <property type="entry name" value="Ribosomal_zn-bd"/>
</dbReference>
<dbReference type="NCBIfam" id="TIGR01031">
    <property type="entry name" value="rpmF_bact"/>
    <property type="match status" value="1"/>
</dbReference>
<dbReference type="PANTHER" id="PTHR35534">
    <property type="entry name" value="50S RIBOSOMAL PROTEIN L32"/>
    <property type="match status" value="1"/>
</dbReference>
<dbReference type="PANTHER" id="PTHR35534:SF1">
    <property type="entry name" value="LARGE RIBOSOMAL SUBUNIT PROTEIN BL32"/>
    <property type="match status" value="1"/>
</dbReference>
<dbReference type="Pfam" id="PF01783">
    <property type="entry name" value="Ribosomal_L32p"/>
    <property type="match status" value="1"/>
</dbReference>
<dbReference type="SUPFAM" id="SSF57829">
    <property type="entry name" value="Zn-binding ribosomal proteins"/>
    <property type="match status" value="1"/>
</dbReference>
<protein>
    <recommendedName>
        <fullName evidence="1">Large ribosomal subunit protein bL32</fullName>
    </recommendedName>
    <alternativeName>
        <fullName evidence="3">50S ribosomal protein L32</fullName>
    </alternativeName>
</protein>
<evidence type="ECO:0000255" key="1">
    <source>
        <dbReference type="HAMAP-Rule" id="MF_00340"/>
    </source>
</evidence>
<evidence type="ECO:0000256" key="2">
    <source>
        <dbReference type="SAM" id="MobiDB-lite"/>
    </source>
</evidence>
<evidence type="ECO:0000305" key="3"/>
<accession>B3PEU8</accession>
<reference key="1">
    <citation type="journal article" date="2008" name="J. Bacteriol.">
        <title>Insights into plant cell wall degradation from the genome sequence of the soil bacterium Cellvibrio japonicus.</title>
        <authorList>
            <person name="DeBoy R.T."/>
            <person name="Mongodin E.F."/>
            <person name="Fouts D.E."/>
            <person name="Tailford L.E."/>
            <person name="Khouri H."/>
            <person name="Emerson J.B."/>
            <person name="Mohamoud Y."/>
            <person name="Watkins K."/>
            <person name="Henrissat B."/>
            <person name="Gilbert H.J."/>
            <person name="Nelson K.E."/>
        </authorList>
    </citation>
    <scope>NUCLEOTIDE SEQUENCE [LARGE SCALE GENOMIC DNA]</scope>
    <source>
        <strain>Ueda107</strain>
    </source>
</reference>
<comment type="similarity">
    <text evidence="1">Belongs to the bacterial ribosomal protein bL32 family.</text>
</comment>
<gene>
    <name evidence="1" type="primary">rpmF</name>
    <name type="ordered locus">CJA_1673</name>
</gene>
<keyword id="KW-1185">Reference proteome</keyword>
<keyword id="KW-0687">Ribonucleoprotein</keyword>
<keyword id="KW-0689">Ribosomal protein</keyword>
<feature type="chain" id="PRO_1000120102" description="Large ribosomal subunit protein bL32">
    <location>
        <begin position="1"/>
        <end position="60"/>
    </location>
</feature>
<feature type="region of interest" description="Disordered" evidence="2">
    <location>
        <begin position="1"/>
        <end position="28"/>
    </location>
</feature>
<feature type="compositionally biased region" description="Basic residues" evidence="2">
    <location>
        <begin position="7"/>
        <end position="16"/>
    </location>
</feature>